<dbReference type="EMBL" id="L78668">
    <property type="protein sequence ID" value="AAC05598.1"/>
    <property type="molecule type" value="Genomic_DNA"/>
</dbReference>
<dbReference type="SMR" id="Q26481"/>
<dbReference type="OrthoDB" id="1618453at2759"/>
<dbReference type="GO" id="GO:0022625">
    <property type="term" value="C:cytosolic large ribosomal subunit"/>
    <property type="evidence" value="ECO:0007669"/>
    <property type="project" value="TreeGrafter"/>
</dbReference>
<dbReference type="GO" id="GO:0005634">
    <property type="term" value="C:nucleus"/>
    <property type="evidence" value="ECO:0007669"/>
    <property type="project" value="UniProtKB-SubCell"/>
</dbReference>
<dbReference type="GO" id="GO:0008097">
    <property type="term" value="F:5S rRNA binding"/>
    <property type="evidence" value="ECO:0007669"/>
    <property type="project" value="InterPro"/>
</dbReference>
<dbReference type="GO" id="GO:0003735">
    <property type="term" value="F:structural constituent of ribosome"/>
    <property type="evidence" value="ECO:0007669"/>
    <property type="project" value="InterPro"/>
</dbReference>
<dbReference type="GO" id="GO:0000027">
    <property type="term" value="P:ribosomal large subunit assembly"/>
    <property type="evidence" value="ECO:0007669"/>
    <property type="project" value="TreeGrafter"/>
</dbReference>
<dbReference type="GO" id="GO:0006412">
    <property type="term" value="P:translation"/>
    <property type="evidence" value="ECO:0007669"/>
    <property type="project" value="InterPro"/>
</dbReference>
<dbReference type="CDD" id="cd00432">
    <property type="entry name" value="Ribosomal_L18_L5e"/>
    <property type="match status" value="1"/>
</dbReference>
<dbReference type="FunFam" id="3.30.420.100:FF:000002">
    <property type="entry name" value="60S ribosomal protein L5"/>
    <property type="match status" value="1"/>
</dbReference>
<dbReference type="Gene3D" id="3.30.420.100">
    <property type="match status" value="1"/>
</dbReference>
<dbReference type="HAMAP" id="MF_01337_A">
    <property type="entry name" value="Ribosomal_uL18_A"/>
    <property type="match status" value="1"/>
</dbReference>
<dbReference type="InterPro" id="IPR005485">
    <property type="entry name" value="Rbsml_uL18_euk"/>
</dbReference>
<dbReference type="InterPro" id="IPR025607">
    <property type="entry name" value="Ribosomal_uL18_C_euk"/>
</dbReference>
<dbReference type="PANTHER" id="PTHR23410:SF12">
    <property type="entry name" value="LARGE RIBOSOMAL SUBUNIT PROTEIN UL18"/>
    <property type="match status" value="1"/>
</dbReference>
<dbReference type="PANTHER" id="PTHR23410">
    <property type="entry name" value="RIBOSOMAL PROTEIN L5-RELATED"/>
    <property type="match status" value="1"/>
</dbReference>
<dbReference type="Pfam" id="PF14204">
    <property type="entry name" value="Ribosomal_L18_c"/>
    <property type="match status" value="1"/>
</dbReference>
<dbReference type="Pfam" id="PF17144">
    <property type="entry name" value="Ribosomal_L5e"/>
    <property type="match status" value="1"/>
</dbReference>
<dbReference type="PRINTS" id="PR00058">
    <property type="entry name" value="RIBOSOMALL5"/>
</dbReference>
<dbReference type="SUPFAM" id="SSF53137">
    <property type="entry name" value="Translational machinery components"/>
    <property type="match status" value="1"/>
</dbReference>
<proteinExistence type="inferred from homology"/>
<sequence>MGFVKVVKNKAYFKRYQVKYKRRRQGKTDYFARKRLVVQDKNKYNTPKYRMIVRFTNKDIVCQIAYARIEGDVVICAAYAHELPRYGVKVGLTNYAAAYCTGLLLSRRLLNKFGLDEIYEGQTEIDGDEFYVEDVDGKPGAFRAFLDVGLARTTTGAKVFGAMKGAADGGLDIPHSTKRFPGYDDESGDFSAEVHRSHIFGGHVSNYMKELEEEDEEAFKRQFSQYIKHGVTADTVEEMYTKAHAAIREDPTPKKKTDFAGKTKRWNRKKMTFSQRRDRVKQKKASFLRAKQQEG</sequence>
<comment type="function">
    <text evidence="2">Component of the ribosome, a large ribonucleoprotein complex responsible for the synthesis of proteins in the cell. The small ribosomal subunit (SSU) binds messenger RNAs (mRNAs) and translates the encoded message by selecting cognate aminoacyl-transfer RNA (tRNA) molecules. The large subunit (LSU) contains the ribosomal catalytic site termed the peptidyl transferase center (PTC), which catalyzes the formation of peptide bonds, thereby polymerizing the amino acids delivered by tRNAs into a polypeptide chain. The nascent polypeptides leave the ribosome through a tunnel in the LSU and interact with protein factors that function in enzymatic processing, targeting, and the membrane insertion of nascent chains at the exit of the ribosomal tunnel.</text>
</comment>
<comment type="subunit">
    <text evidence="2">Component of the large ribosomal subunit (LSU).</text>
</comment>
<comment type="subcellular location">
    <subcellularLocation>
        <location evidence="2">Cytoplasm</location>
    </subcellularLocation>
    <subcellularLocation>
        <location evidence="2">Nucleus</location>
    </subcellularLocation>
</comment>
<comment type="similarity">
    <text evidence="4">Belongs to the universal ribosomal protein uL18 family.</text>
</comment>
<evidence type="ECO:0000250" key="1"/>
<evidence type="ECO:0000250" key="2">
    <source>
        <dbReference type="UniProtKB" id="P26321"/>
    </source>
</evidence>
<evidence type="ECO:0000256" key="3">
    <source>
        <dbReference type="SAM" id="MobiDB-lite"/>
    </source>
</evidence>
<evidence type="ECO:0000305" key="4"/>
<keyword id="KW-0963">Cytoplasm</keyword>
<keyword id="KW-0539">Nucleus</keyword>
<keyword id="KW-0687">Ribonucleoprotein</keyword>
<keyword id="KW-0689">Ribosomal protein</keyword>
<keyword id="KW-0694">RNA-binding</keyword>
<keyword id="KW-0699">rRNA-binding</keyword>
<protein>
    <recommendedName>
        <fullName evidence="4">Large ribosomal subunit protein uL18</fullName>
    </recommendedName>
    <alternativeName>
        <fullName>60S ribosomal protein L5</fullName>
    </alternativeName>
</protein>
<accession>Q26481</accession>
<feature type="initiator methionine" description="Removed" evidence="1">
    <location>
        <position position="1"/>
    </location>
</feature>
<feature type="chain" id="PRO_0000131440" description="Large ribosomal subunit protein uL18">
    <location>
        <begin position="2"/>
        <end position="295"/>
    </location>
</feature>
<feature type="region of interest" description="Disordered" evidence="3">
    <location>
        <begin position="251"/>
        <end position="295"/>
    </location>
</feature>
<feature type="compositionally biased region" description="Basic and acidic residues" evidence="3">
    <location>
        <begin position="251"/>
        <end position="261"/>
    </location>
</feature>
<feature type="compositionally biased region" description="Basic residues" evidence="3">
    <location>
        <begin position="262"/>
        <end position="271"/>
    </location>
</feature>
<gene>
    <name type="primary">RPL5</name>
</gene>
<name>RL5_STYCL</name>
<reference key="1">
    <citation type="submission" date="1996-06" db="EMBL/GenBank/DDBJ databases">
        <authorList>
            <person name="Swalla B.J."/>
            <person name="Jeffery W.R."/>
        </authorList>
    </citation>
    <scope>NUCLEOTIDE SEQUENCE [GENOMIC DNA]</scope>
</reference>
<organism>
    <name type="scientific">Styela clava</name>
    <name type="common">Sea squirt</name>
    <dbReference type="NCBI Taxonomy" id="7725"/>
    <lineage>
        <taxon>Eukaryota</taxon>
        <taxon>Metazoa</taxon>
        <taxon>Chordata</taxon>
        <taxon>Tunicata</taxon>
        <taxon>Ascidiacea</taxon>
        <taxon>Stolidobranchia</taxon>
        <taxon>Styelidae</taxon>
        <taxon>Styela</taxon>
    </lineage>
</organism>